<protein>
    <recommendedName>
        <fullName>Histidine--tRNA ligase</fullName>
        <ecNumber>6.1.1.21</ecNumber>
    </recommendedName>
    <alternativeName>
        <fullName>Histidyl-tRNA synthetase</fullName>
        <shortName>HisRS</shortName>
    </alternativeName>
</protein>
<comment type="catalytic activity">
    <reaction>
        <text>tRNA(His) + L-histidine + ATP = L-histidyl-tRNA(His) + AMP + diphosphate + H(+)</text>
        <dbReference type="Rhea" id="RHEA:17313"/>
        <dbReference type="Rhea" id="RHEA-COMP:9665"/>
        <dbReference type="Rhea" id="RHEA-COMP:9689"/>
        <dbReference type="ChEBI" id="CHEBI:15378"/>
        <dbReference type="ChEBI" id="CHEBI:30616"/>
        <dbReference type="ChEBI" id="CHEBI:33019"/>
        <dbReference type="ChEBI" id="CHEBI:57595"/>
        <dbReference type="ChEBI" id="CHEBI:78442"/>
        <dbReference type="ChEBI" id="CHEBI:78527"/>
        <dbReference type="ChEBI" id="CHEBI:456215"/>
        <dbReference type="EC" id="6.1.1.21"/>
    </reaction>
</comment>
<comment type="subunit">
    <text evidence="1">Homodimer.</text>
</comment>
<comment type="subcellular location">
    <subcellularLocation>
        <location evidence="1">Cytoplasm</location>
    </subcellularLocation>
</comment>
<comment type="similarity">
    <text evidence="2">Belongs to the class-II aminoacyl-tRNA synthetase family.</text>
</comment>
<dbReference type="EC" id="6.1.1.21"/>
<dbReference type="EMBL" id="AE001273">
    <property type="protein sequence ID" value="AAC68145.1"/>
    <property type="molecule type" value="Genomic_DNA"/>
</dbReference>
<dbReference type="PIR" id="H71500">
    <property type="entry name" value="H71500"/>
</dbReference>
<dbReference type="RefSeq" id="NP_220058.1">
    <property type="nucleotide sequence ID" value="NC_000117.1"/>
</dbReference>
<dbReference type="RefSeq" id="WP_009871907.1">
    <property type="nucleotide sequence ID" value="NC_000117.1"/>
</dbReference>
<dbReference type="SMR" id="O84547"/>
<dbReference type="FunCoup" id="O84547">
    <property type="interactions" value="256"/>
</dbReference>
<dbReference type="STRING" id="272561.CT_543"/>
<dbReference type="EnsemblBacteria" id="AAC68145">
    <property type="protein sequence ID" value="AAC68145"/>
    <property type="gene ID" value="CT_543"/>
</dbReference>
<dbReference type="GeneID" id="884320"/>
<dbReference type="KEGG" id="ctr:CT_543"/>
<dbReference type="PATRIC" id="fig|272561.5.peg.588"/>
<dbReference type="HOGENOM" id="CLU_025113_1_1_0"/>
<dbReference type="InParanoid" id="O84547"/>
<dbReference type="OrthoDB" id="9800814at2"/>
<dbReference type="Proteomes" id="UP000000431">
    <property type="component" value="Chromosome"/>
</dbReference>
<dbReference type="GO" id="GO:0005737">
    <property type="term" value="C:cytoplasm"/>
    <property type="evidence" value="ECO:0007669"/>
    <property type="project" value="UniProtKB-SubCell"/>
</dbReference>
<dbReference type="GO" id="GO:0005524">
    <property type="term" value="F:ATP binding"/>
    <property type="evidence" value="ECO:0007669"/>
    <property type="project" value="UniProtKB-UniRule"/>
</dbReference>
<dbReference type="GO" id="GO:0004821">
    <property type="term" value="F:histidine-tRNA ligase activity"/>
    <property type="evidence" value="ECO:0000318"/>
    <property type="project" value="GO_Central"/>
</dbReference>
<dbReference type="GO" id="GO:0006427">
    <property type="term" value="P:histidyl-tRNA aminoacylation"/>
    <property type="evidence" value="ECO:0000318"/>
    <property type="project" value="GO_Central"/>
</dbReference>
<dbReference type="CDD" id="cd00773">
    <property type="entry name" value="HisRS-like_core"/>
    <property type="match status" value="1"/>
</dbReference>
<dbReference type="FunFam" id="3.30.930.10:FF:000166">
    <property type="entry name" value="Histidine--tRNA ligase"/>
    <property type="match status" value="1"/>
</dbReference>
<dbReference type="Gene3D" id="3.40.50.800">
    <property type="entry name" value="Anticodon-binding domain"/>
    <property type="match status" value="1"/>
</dbReference>
<dbReference type="Gene3D" id="3.30.930.10">
    <property type="entry name" value="Bira Bifunctional Protein, Domain 2"/>
    <property type="match status" value="1"/>
</dbReference>
<dbReference type="HAMAP" id="MF_00127">
    <property type="entry name" value="His_tRNA_synth"/>
    <property type="match status" value="1"/>
</dbReference>
<dbReference type="InterPro" id="IPR006195">
    <property type="entry name" value="aa-tRNA-synth_II"/>
</dbReference>
<dbReference type="InterPro" id="IPR045864">
    <property type="entry name" value="aa-tRNA-synth_II/BPL/LPL"/>
</dbReference>
<dbReference type="InterPro" id="IPR004154">
    <property type="entry name" value="Anticodon-bd"/>
</dbReference>
<dbReference type="InterPro" id="IPR036621">
    <property type="entry name" value="Anticodon-bd_dom_sf"/>
</dbReference>
<dbReference type="InterPro" id="IPR015807">
    <property type="entry name" value="His-tRNA-ligase"/>
</dbReference>
<dbReference type="InterPro" id="IPR041715">
    <property type="entry name" value="HisRS-like_core"/>
</dbReference>
<dbReference type="InterPro" id="IPR004516">
    <property type="entry name" value="HisRS/HisZ"/>
</dbReference>
<dbReference type="NCBIfam" id="TIGR00442">
    <property type="entry name" value="hisS"/>
    <property type="match status" value="1"/>
</dbReference>
<dbReference type="PANTHER" id="PTHR43707:SF1">
    <property type="entry name" value="HISTIDINE--TRNA LIGASE, MITOCHONDRIAL-RELATED"/>
    <property type="match status" value="1"/>
</dbReference>
<dbReference type="PANTHER" id="PTHR43707">
    <property type="entry name" value="HISTIDYL-TRNA SYNTHETASE"/>
    <property type="match status" value="1"/>
</dbReference>
<dbReference type="Pfam" id="PF03129">
    <property type="entry name" value="HGTP_anticodon"/>
    <property type="match status" value="1"/>
</dbReference>
<dbReference type="Pfam" id="PF13393">
    <property type="entry name" value="tRNA-synt_His"/>
    <property type="match status" value="1"/>
</dbReference>
<dbReference type="PIRSF" id="PIRSF001549">
    <property type="entry name" value="His-tRNA_synth"/>
    <property type="match status" value="1"/>
</dbReference>
<dbReference type="SUPFAM" id="SSF52954">
    <property type="entry name" value="Class II aaRS ABD-related"/>
    <property type="match status" value="1"/>
</dbReference>
<dbReference type="SUPFAM" id="SSF55681">
    <property type="entry name" value="Class II aaRS and biotin synthetases"/>
    <property type="match status" value="1"/>
</dbReference>
<dbReference type="PROSITE" id="PS50862">
    <property type="entry name" value="AA_TRNA_LIGASE_II"/>
    <property type="match status" value="1"/>
</dbReference>
<keyword id="KW-0030">Aminoacyl-tRNA synthetase</keyword>
<keyword id="KW-0067">ATP-binding</keyword>
<keyword id="KW-0963">Cytoplasm</keyword>
<keyword id="KW-0436">Ligase</keyword>
<keyword id="KW-0547">Nucleotide-binding</keyword>
<keyword id="KW-0648">Protein biosynthesis</keyword>
<keyword id="KW-1185">Reference proteome</keyword>
<proteinExistence type="inferred from homology"/>
<name>SYH_CHLTR</name>
<gene>
    <name type="primary">hisS</name>
    <name type="ordered locus">CT_543</name>
</gene>
<reference key="1">
    <citation type="journal article" date="1998" name="Science">
        <title>Genome sequence of an obligate intracellular pathogen of humans: Chlamydia trachomatis.</title>
        <authorList>
            <person name="Stephens R.S."/>
            <person name="Kalman S."/>
            <person name="Lammel C.J."/>
            <person name="Fan J."/>
            <person name="Marathe R."/>
            <person name="Aravind L."/>
            <person name="Mitchell W.P."/>
            <person name="Olinger L."/>
            <person name="Tatusov R.L."/>
            <person name="Zhao Q."/>
            <person name="Koonin E.V."/>
            <person name="Davis R.W."/>
        </authorList>
    </citation>
    <scope>NUCLEOTIDE SEQUENCE [LARGE SCALE GENOMIC DNA]</scope>
    <source>
        <strain>ATCC VR-885 / DSM 19411 / UW-3/Cx</strain>
    </source>
</reference>
<feature type="chain" id="PRO_0000136136" description="Histidine--tRNA ligase">
    <location>
        <begin position="1"/>
        <end position="428"/>
    </location>
</feature>
<sequence length="428" mass="49189">MSNALPKGVFDIFPYVTSPKNLWRNSSLWKRVEHAAHRICNLYGFDEIRTPVFEKTETFLRVGEYSDIVKKEVYTFLDKKRRSLTLRPEGTAAVVRALLDHSADMRKDNKFYYILPMFRYERQQSGRYRQHHQFGLEAIGVRHPLRDAEVLSLLWDFYAAVGLQHMQIHVNFLGGQKTRARYDEALREFFRKDLDRLSPLSQERYHANLLRILDSKEPEDQEFIEKAPSILDYIDDRDLSYFDAVLAQLKALGISFAINPRLVRGLDYYTDLVFEAVTVVGEHSYALGGGGRYDELVAQSGGPSMPAFGFGVGLERVIQTLLEQGNSLSTSTRRLRLIPMDEQADAFCFSWANRLRNLGIATEVDWSHKKPKLSLKDAADQQVSFVCLLGEQELATKQFIVKDMSLHQSFSGAQQDVEQRLVYEVQNA</sequence>
<evidence type="ECO:0000250" key="1"/>
<evidence type="ECO:0000305" key="2"/>
<organism>
    <name type="scientific">Chlamydia trachomatis serovar D (strain ATCC VR-885 / DSM 19411 / UW-3/Cx)</name>
    <dbReference type="NCBI Taxonomy" id="272561"/>
    <lineage>
        <taxon>Bacteria</taxon>
        <taxon>Pseudomonadati</taxon>
        <taxon>Chlamydiota</taxon>
        <taxon>Chlamydiia</taxon>
        <taxon>Chlamydiales</taxon>
        <taxon>Chlamydiaceae</taxon>
        <taxon>Chlamydia/Chlamydophila group</taxon>
        <taxon>Chlamydia</taxon>
    </lineage>
</organism>
<accession>O84547</accession>